<name>RL21_SALPA</name>
<protein>
    <recommendedName>
        <fullName evidence="1">Large ribosomal subunit protein bL21</fullName>
    </recommendedName>
    <alternativeName>
        <fullName evidence="2">50S ribosomal protein L21</fullName>
    </alternativeName>
</protein>
<sequence length="103" mass="11592">MYAVFQSGGKQHRVSEGQTVRLEKLDIATGETIEFAEVLMIANGEEVKIGIPFVDGGVIKAEVVAHGRGEKVKIVKFRRRKHYRKQQGHRQWFTDVKITGISA</sequence>
<gene>
    <name evidence="1" type="primary">rplU</name>
    <name type="ordered locus">SPA3171</name>
</gene>
<evidence type="ECO:0000255" key="1">
    <source>
        <dbReference type="HAMAP-Rule" id="MF_01363"/>
    </source>
</evidence>
<evidence type="ECO:0000305" key="2"/>
<dbReference type="EMBL" id="CP000026">
    <property type="protein sequence ID" value="AAV78996.1"/>
    <property type="molecule type" value="Genomic_DNA"/>
</dbReference>
<dbReference type="RefSeq" id="WP_000271395.1">
    <property type="nucleotide sequence ID" value="NC_006511.1"/>
</dbReference>
<dbReference type="SMR" id="Q5PLB4"/>
<dbReference type="KEGG" id="spt:SPA3171"/>
<dbReference type="HOGENOM" id="CLU_061463_3_3_6"/>
<dbReference type="Proteomes" id="UP000008185">
    <property type="component" value="Chromosome"/>
</dbReference>
<dbReference type="GO" id="GO:0005737">
    <property type="term" value="C:cytoplasm"/>
    <property type="evidence" value="ECO:0007669"/>
    <property type="project" value="UniProtKB-ARBA"/>
</dbReference>
<dbReference type="GO" id="GO:1990904">
    <property type="term" value="C:ribonucleoprotein complex"/>
    <property type="evidence" value="ECO:0007669"/>
    <property type="project" value="UniProtKB-KW"/>
</dbReference>
<dbReference type="GO" id="GO:0005840">
    <property type="term" value="C:ribosome"/>
    <property type="evidence" value="ECO:0007669"/>
    <property type="project" value="UniProtKB-KW"/>
</dbReference>
<dbReference type="GO" id="GO:0019843">
    <property type="term" value="F:rRNA binding"/>
    <property type="evidence" value="ECO:0007669"/>
    <property type="project" value="UniProtKB-UniRule"/>
</dbReference>
<dbReference type="GO" id="GO:0003735">
    <property type="term" value="F:structural constituent of ribosome"/>
    <property type="evidence" value="ECO:0007669"/>
    <property type="project" value="InterPro"/>
</dbReference>
<dbReference type="GO" id="GO:0006412">
    <property type="term" value="P:translation"/>
    <property type="evidence" value="ECO:0007669"/>
    <property type="project" value="UniProtKB-UniRule"/>
</dbReference>
<dbReference type="HAMAP" id="MF_01363">
    <property type="entry name" value="Ribosomal_bL21"/>
    <property type="match status" value="1"/>
</dbReference>
<dbReference type="InterPro" id="IPR028909">
    <property type="entry name" value="bL21-like"/>
</dbReference>
<dbReference type="InterPro" id="IPR036164">
    <property type="entry name" value="bL21-like_sf"/>
</dbReference>
<dbReference type="InterPro" id="IPR001787">
    <property type="entry name" value="Ribosomal_bL21"/>
</dbReference>
<dbReference type="InterPro" id="IPR018258">
    <property type="entry name" value="Ribosomal_bL21_CS"/>
</dbReference>
<dbReference type="NCBIfam" id="TIGR00061">
    <property type="entry name" value="L21"/>
    <property type="match status" value="1"/>
</dbReference>
<dbReference type="PANTHER" id="PTHR21349">
    <property type="entry name" value="50S RIBOSOMAL PROTEIN L21"/>
    <property type="match status" value="1"/>
</dbReference>
<dbReference type="PANTHER" id="PTHR21349:SF0">
    <property type="entry name" value="LARGE RIBOSOMAL SUBUNIT PROTEIN BL21M"/>
    <property type="match status" value="1"/>
</dbReference>
<dbReference type="Pfam" id="PF00829">
    <property type="entry name" value="Ribosomal_L21p"/>
    <property type="match status" value="1"/>
</dbReference>
<dbReference type="SUPFAM" id="SSF141091">
    <property type="entry name" value="L21p-like"/>
    <property type="match status" value="1"/>
</dbReference>
<dbReference type="PROSITE" id="PS01169">
    <property type="entry name" value="RIBOSOMAL_L21"/>
    <property type="match status" value="1"/>
</dbReference>
<reference key="1">
    <citation type="journal article" date="2004" name="Nat. Genet.">
        <title>Comparison of genome degradation in Paratyphi A and Typhi, human-restricted serovars of Salmonella enterica that cause typhoid.</title>
        <authorList>
            <person name="McClelland M."/>
            <person name="Sanderson K.E."/>
            <person name="Clifton S.W."/>
            <person name="Latreille P."/>
            <person name="Porwollik S."/>
            <person name="Sabo A."/>
            <person name="Meyer R."/>
            <person name="Bieri T."/>
            <person name="Ozersky P."/>
            <person name="McLellan M."/>
            <person name="Harkins C.R."/>
            <person name="Wang C."/>
            <person name="Nguyen C."/>
            <person name="Berghoff A."/>
            <person name="Elliott G."/>
            <person name="Kohlberg S."/>
            <person name="Strong C."/>
            <person name="Du F."/>
            <person name="Carter J."/>
            <person name="Kremizki C."/>
            <person name="Layman D."/>
            <person name="Leonard S."/>
            <person name="Sun H."/>
            <person name="Fulton L."/>
            <person name="Nash W."/>
            <person name="Miner T."/>
            <person name="Minx P."/>
            <person name="Delehaunty K."/>
            <person name="Fronick C."/>
            <person name="Magrini V."/>
            <person name="Nhan M."/>
            <person name="Warren W."/>
            <person name="Florea L."/>
            <person name="Spieth J."/>
            <person name="Wilson R.K."/>
        </authorList>
    </citation>
    <scope>NUCLEOTIDE SEQUENCE [LARGE SCALE GENOMIC DNA]</scope>
    <source>
        <strain>ATCC 9150 / SARB42</strain>
    </source>
</reference>
<accession>Q5PLB4</accession>
<feature type="chain" id="PRO_0000269371" description="Large ribosomal subunit protein bL21">
    <location>
        <begin position="1"/>
        <end position="103"/>
    </location>
</feature>
<proteinExistence type="inferred from homology"/>
<keyword id="KW-0687">Ribonucleoprotein</keyword>
<keyword id="KW-0689">Ribosomal protein</keyword>
<keyword id="KW-0694">RNA-binding</keyword>
<keyword id="KW-0699">rRNA-binding</keyword>
<comment type="function">
    <text evidence="1">This protein binds to 23S rRNA in the presence of protein L20.</text>
</comment>
<comment type="subunit">
    <text evidence="1">Part of the 50S ribosomal subunit. Contacts protein L20.</text>
</comment>
<comment type="similarity">
    <text evidence="1">Belongs to the bacterial ribosomal protein bL21 family.</text>
</comment>
<organism>
    <name type="scientific">Salmonella paratyphi A (strain ATCC 9150 / SARB42)</name>
    <dbReference type="NCBI Taxonomy" id="295319"/>
    <lineage>
        <taxon>Bacteria</taxon>
        <taxon>Pseudomonadati</taxon>
        <taxon>Pseudomonadota</taxon>
        <taxon>Gammaproteobacteria</taxon>
        <taxon>Enterobacterales</taxon>
        <taxon>Enterobacteriaceae</taxon>
        <taxon>Salmonella</taxon>
    </lineage>
</organism>